<dbReference type="EC" id="2.1.1.-" evidence="1"/>
<dbReference type="EMBL" id="BA000032">
    <property type="protein sequence ID" value="BAC61483.1"/>
    <property type="molecule type" value="Genomic_DNA"/>
</dbReference>
<dbReference type="RefSeq" id="NP_799650.1">
    <property type="nucleotide sequence ID" value="NC_004605.1"/>
</dbReference>
<dbReference type="SMR" id="Q87JV8"/>
<dbReference type="KEGG" id="vpa:VPA0140"/>
<dbReference type="PATRIC" id="fig|223926.6.peg.3099"/>
<dbReference type="eggNOG" id="COG1901">
    <property type="taxonomic scope" value="Bacteria"/>
</dbReference>
<dbReference type="HOGENOM" id="CLU_107018_0_0_6"/>
<dbReference type="Proteomes" id="UP000002493">
    <property type="component" value="Chromosome 2"/>
</dbReference>
<dbReference type="GO" id="GO:0005737">
    <property type="term" value="C:cytoplasm"/>
    <property type="evidence" value="ECO:0007669"/>
    <property type="project" value="UniProtKB-SubCell"/>
</dbReference>
<dbReference type="GO" id="GO:0008757">
    <property type="term" value="F:S-adenosylmethionine-dependent methyltransferase activity"/>
    <property type="evidence" value="ECO:0007669"/>
    <property type="project" value="UniProtKB-UniRule"/>
</dbReference>
<dbReference type="GO" id="GO:0008175">
    <property type="term" value="F:tRNA methyltransferase activity"/>
    <property type="evidence" value="ECO:0007669"/>
    <property type="project" value="InterPro"/>
</dbReference>
<dbReference type="GO" id="GO:0030488">
    <property type="term" value="P:tRNA methylation"/>
    <property type="evidence" value="ECO:0007669"/>
    <property type="project" value="TreeGrafter"/>
</dbReference>
<dbReference type="CDD" id="cd18087">
    <property type="entry name" value="TrmY-like"/>
    <property type="match status" value="1"/>
</dbReference>
<dbReference type="Gene3D" id="3.40.1280.10">
    <property type="match status" value="1"/>
</dbReference>
<dbReference type="HAMAP" id="MF_00587">
    <property type="entry name" value="tRNA_methyltr_TrmY"/>
    <property type="match status" value="1"/>
</dbReference>
<dbReference type="InterPro" id="IPR029028">
    <property type="entry name" value="Alpha/beta_knot_MTases"/>
</dbReference>
<dbReference type="InterPro" id="IPR007158">
    <property type="entry name" value="TrmY"/>
</dbReference>
<dbReference type="InterPro" id="IPR029026">
    <property type="entry name" value="tRNA_m1G_MTases_N"/>
</dbReference>
<dbReference type="NCBIfam" id="NF002560">
    <property type="entry name" value="PRK02135.1"/>
    <property type="match status" value="1"/>
</dbReference>
<dbReference type="PANTHER" id="PTHR40703">
    <property type="entry name" value="TRNA (PSEUDOURIDINE(54)-N(1))-METHYLTRANSFERASE"/>
    <property type="match status" value="1"/>
</dbReference>
<dbReference type="PANTHER" id="PTHR40703:SF1">
    <property type="entry name" value="TRNA (PSEUDOURIDINE(54)-N(1))-METHYLTRANSFERASE"/>
    <property type="match status" value="1"/>
</dbReference>
<dbReference type="Pfam" id="PF04013">
    <property type="entry name" value="Methyltrn_RNA_2"/>
    <property type="match status" value="1"/>
</dbReference>
<dbReference type="SUPFAM" id="SSF75217">
    <property type="entry name" value="alpha/beta knot"/>
    <property type="match status" value="1"/>
</dbReference>
<keyword id="KW-0963">Cytoplasm</keyword>
<keyword id="KW-0489">Methyltransferase</keyword>
<keyword id="KW-0949">S-adenosyl-L-methionine</keyword>
<keyword id="KW-0808">Transferase</keyword>
<reference key="1">
    <citation type="journal article" date="2003" name="Lancet">
        <title>Genome sequence of Vibrio parahaemolyticus: a pathogenic mechanism distinct from that of V. cholerae.</title>
        <authorList>
            <person name="Makino K."/>
            <person name="Oshima K."/>
            <person name="Kurokawa K."/>
            <person name="Yokoyama K."/>
            <person name="Uda T."/>
            <person name="Tagomori K."/>
            <person name="Iijima Y."/>
            <person name="Najima M."/>
            <person name="Nakano M."/>
            <person name="Yamashita A."/>
            <person name="Kubota Y."/>
            <person name="Kimura S."/>
            <person name="Yasunaga T."/>
            <person name="Honda T."/>
            <person name="Shinagawa H."/>
            <person name="Hattori M."/>
            <person name="Iida T."/>
        </authorList>
    </citation>
    <scope>NUCLEOTIDE SEQUENCE [LARGE SCALE GENOMIC DNA]</scope>
    <source>
        <strain>RIMD 2210633</strain>
    </source>
</reference>
<protein>
    <recommendedName>
        <fullName evidence="1">Putative pseudouridine methyltransferase</fullName>
        <ecNumber evidence="1">2.1.1.-</ecNumber>
    </recommendedName>
</protein>
<evidence type="ECO:0000255" key="1">
    <source>
        <dbReference type="HAMAP-Rule" id="MF_00587"/>
    </source>
</evidence>
<organism>
    <name type="scientific">Vibrio parahaemolyticus serotype O3:K6 (strain RIMD 2210633)</name>
    <dbReference type="NCBI Taxonomy" id="223926"/>
    <lineage>
        <taxon>Bacteria</taxon>
        <taxon>Pseudomonadati</taxon>
        <taxon>Pseudomonadota</taxon>
        <taxon>Gammaproteobacteria</taxon>
        <taxon>Vibrionales</taxon>
        <taxon>Vibrionaceae</taxon>
        <taxon>Vibrio</taxon>
    </lineage>
</organism>
<accession>Q87JV8</accession>
<gene>
    <name type="ordered locus">VPA0140</name>
</gene>
<comment type="subcellular location">
    <subcellularLocation>
        <location evidence="1">Cytoplasm</location>
    </subcellularLocation>
</comment>
<comment type="similarity">
    <text evidence="1">Belongs to the methyltransferase superfamily. TrmY family.</text>
</comment>
<name>TRMYL_VIBPA</name>
<sequence length="199" mass="22278">MRSFVLRARAAPTTSKALLEGVGNEAHTEILAHTMMNTMFVAQSHREDVVVHLVLESTKDYSRTITIRSNDITNIGGFHESTLIAAVARALDASVGMGKEQLREVEPGITVRTVSFERLVQELAEDHQLYMLDKKGEFVRDAEIGENPCFLLTDHIPMPKKSFNSLKRLGTEKISLGPKMLFASQCVVLIHNELDIREF</sequence>
<feature type="chain" id="PRO_0000157957" description="Putative pseudouridine methyltransferase">
    <location>
        <begin position="1"/>
        <end position="199"/>
    </location>
</feature>
<feature type="binding site" evidence="1">
    <location>
        <position position="132"/>
    </location>
    <ligand>
        <name>S-adenosyl-L-methionine</name>
        <dbReference type="ChEBI" id="CHEBI:59789"/>
    </ligand>
</feature>
<feature type="binding site" evidence="1">
    <location>
        <position position="186"/>
    </location>
    <ligand>
        <name>S-adenosyl-L-methionine</name>
        <dbReference type="ChEBI" id="CHEBI:59789"/>
    </ligand>
</feature>
<proteinExistence type="inferred from homology"/>